<organism>
    <name type="scientific">Clostridium novyi (strain NT)</name>
    <dbReference type="NCBI Taxonomy" id="386415"/>
    <lineage>
        <taxon>Bacteria</taxon>
        <taxon>Bacillati</taxon>
        <taxon>Bacillota</taxon>
        <taxon>Clostridia</taxon>
        <taxon>Eubacteriales</taxon>
        <taxon>Clostridiaceae</taxon>
        <taxon>Clostridium</taxon>
    </lineage>
</organism>
<name>RS20_CLONN</name>
<gene>
    <name evidence="1" type="primary">rpsT</name>
    <name type="ordered locus">NT01CX_0065</name>
</gene>
<dbReference type="EMBL" id="CP000382">
    <property type="protein sequence ID" value="ABK62262.1"/>
    <property type="molecule type" value="Genomic_DNA"/>
</dbReference>
<dbReference type="RefSeq" id="WP_011722566.1">
    <property type="nucleotide sequence ID" value="NC_008593.1"/>
</dbReference>
<dbReference type="SMR" id="A0Q1S2"/>
<dbReference type="STRING" id="386415.NT01CX_0065"/>
<dbReference type="KEGG" id="cno:NT01CX_0065"/>
<dbReference type="eggNOG" id="COG0268">
    <property type="taxonomic scope" value="Bacteria"/>
</dbReference>
<dbReference type="HOGENOM" id="CLU_160655_1_0_9"/>
<dbReference type="Proteomes" id="UP000008220">
    <property type="component" value="Chromosome"/>
</dbReference>
<dbReference type="GO" id="GO:0005829">
    <property type="term" value="C:cytosol"/>
    <property type="evidence" value="ECO:0007669"/>
    <property type="project" value="TreeGrafter"/>
</dbReference>
<dbReference type="GO" id="GO:0015935">
    <property type="term" value="C:small ribosomal subunit"/>
    <property type="evidence" value="ECO:0007669"/>
    <property type="project" value="TreeGrafter"/>
</dbReference>
<dbReference type="GO" id="GO:0070181">
    <property type="term" value="F:small ribosomal subunit rRNA binding"/>
    <property type="evidence" value="ECO:0007669"/>
    <property type="project" value="TreeGrafter"/>
</dbReference>
<dbReference type="GO" id="GO:0003735">
    <property type="term" value="F:structural constituent of ribosome"/>
    <property type="evidence" value="ECO:0007669"/>
    <property type="project" value="InterPro"/>
</dbReference>
<dbReference type="GO" id="GO:0006412">
    <property type="term" value="P:translation"/>
    <property type="evidence" value="ECO:0007669"/>
    <property type="project" value="UniProtKB-UniRule"/>
</dbReference>
<dbReference type="FunFam" id="1.20.58.110:FF:000001">
    <property type="entry name" value="30S ribosomal protein S20"/>
    <property type="match status" value="1"/>
</dbReference>
<dbReference type="Gene3D" id="1.20.58.110">
    <property type="entry name" value="Ribosomal protein S20"/>
    <property type="match status" value="1"/>
</dbReference>
<dbReference type="HAMAP" id="MF_00500">
    <property type="entry name" value="Ribosomal_bS20"/>
    <property type="match status" value="1"/>
</dbReference>
<dbReference type="InterPro" id="IPR002583">
    <property type="entry name" value="Ribosomal_bS20"/>
</dbReference>
<dbReference type="InterPro" id="IPR036510">
    <property type="entry name" value="Ribosomal_bS20_sf"/>
</dbReference>
<dbReference type="NCBIfam" id="TIGR00029">
    <property type="entry name" value="S20"/>
    <property type="match status" value="1"/>
</dbReference>
<dbReference type="PANTHER" id="PTHR33398">
    <property type="entry name" value="30S RIBOSOMAL PROTEIN S20"/>
    <property type="match status" value="1"/>
</dbReference>
<dbReference type="PANTHER" id="PTHR33398:SF1">
    <property type="entry name" value="SMALL RIBOSOMAL SUBUNIT PROTEIN BS20C"/>
    <property type="match status" value="1"/>
</dbReference>
<dbReference type="Pfam" id="PF01649">
    <property type="entry name" value="Ribosomal_S20p"/>
    <property type="match status" value="1"/>
</dbReference>
<dbReference type="SUPFAM" id="SSF46992">
    <property type="entry name" value="Ribosomal protein S20"/>
    <property type="match status" value="1"/>
</dbReference>
<proteinExistence type="inferred from homology"/>
<comment type="function">
    <text evidence="1">Binds directly to 16S ribosomal RNA.</text>
</comment>
<comment type="similarity">
    <text evidence="1">Belongs to the bacterial ribosomal protein bS20 family.</text>
</comment>
<reference key="1">
    <citation type="journal article" date="2006" name="Nat. Biotechnol.">
        <title>The genome and transcriptomes of the anti-tumor agent Clostridium novyi-NT.</title>
        <authorList>
            <person name="Bettegowda C."/>
            <person name="Huang X."/>
            <person name="Lin J."/>
            <person name="Cheong I."/>
            <person name="Kohli M."/>
            <person name="Szabo S.A."/>
            <person name="Zhang X."/>
            <person name="Diaz L.A. Jr."/>
            <person name="Velculescu V.E."/>
            <person name="Parmigiani G."/>
            <person name="Kinzler K.W."/>
            <person name="Vogelstein B."/>
            <person name="Zhou S."/>
        </authorList>
    </citation>
    <scope>NUCLEOTIDE SEQUENCE [LARGE SCALE GENOMIC DNA]</scope>
    <source>
        <strain>NT</strain>
    </source>
</reference>
<keyword id="KW-1185">Reference proteome</keyword>
<keyword id="KW-0687">Ribonucleoprotein</keyword>
<keyword id="KW-0689">Ribosomal protein</keyword>
<keyword id="KW-0694">RNA-binding</keyword>
<keyword id="KW-0699">rRNA-binding</keyword>
<evidence type="ECO:0000255" key="1">
    <source>
        <dbReference type="HAMAP-Rule" id="MF_00500"/>
    </source>
</evidence>
<evidence type="ECO:0000305" key="2"/>
<accession>A0Q1S2</accession>
<sequence>MANIKSAKKRIKVIETKTLRNKMIKSALKTKIKNFEVAVANNDLNEAKSAYTIVVKALDMAAAKGILHKNKAARKKSRLATKLSGLNA</sequence>
<feature type="chain" id="PRO_1000014575" description="Small ribosomal subunit protein bS20">
    <location>
        <begin position="1"/>
        <end position="88"/>
    </location>
</feature>
<protein>
    <recommendedName>
        <fullName evidence="1">Small ribosomal subunit protein bS20</fullName>
    </recommendedName>
    <alternativeName>
        <fullName evidence="2">30S ribosomal protein S20</fullName>
    </alternativeName>
</protein>